<gene>
    <name evidence="1" type="primary">recR</name>
    <name type="ordered locus">RSc1194</name>
    <name type="ORF">RS05726</name>
</gene>
<organism>
    <name type="scientific">Ralstonia nicotianae (strain ATCC BAA-1114 / GMI1000)</name>
    <name type="common">Ralstonia solanacearum</name>
    <dbReference type="NCBI Taxonomy" id="267608"/>
    <lineage>
        <taxon>Bacteria</taxon>
        <taxon>Pseudomonadati</taxon>
        <taxon>Pseudomonadota</taxon>
        <taxon>Betaproteobacteria</taxon>
        <taxon>Burkholderiales</taxon>
        <taxon>Burkholderiaceae</taxon>
        <taxon>Ralstonia</taxon>
        <taxon>Ralstonia solanacearum species complex</taxon>
    </lineage>
</organism>
<keyword id="KW-0227">DNA damage</keyword>
<keyword id="KW-0233">DNA recombination</keyword>
<keyword id="KW-0234">DNA repair</keyword>
<keyword id="KW-0479">Metal-binding</keyword>
<keyword id="KW-1185">Reference proteome</keyword>
<keyword id="KW-0862">Zinc</keyword>
<keyword id="KW-0863">Zinc-finger</keyword>
<feature type="chain" id="PRO_0000190369" description="Recombination protein RecR">
    <location>
        <begin position="1"/>
        <end position="207"/>
    </location>
</feature>
<feature type="domain" description="Toprim" evidence="1">
    <location>
        <begin position="85"/>
        <end position="184"/>
    </location>
</feature>
<feature type="zinc finger region" description="C4-type" evidence="1">
    <location>
        <begin position="62"/>
        <end position="77"/>
    </location>
</feature>
<proteinExistence type="inferred from homology"/>
<sequence>MMRGGPGTPSALQMLIEALRVLPGVGPKSAQRMAYHLLQHDREGASRLAEALAEAAESIHHCSRCNTFTEQDVCETCLDPRRDASVLCVVETPADQMMIEQTLTYRGQYFVLMGRLSPLDNIGPKEIHLERLLARATDPALGGPCAEVILATNFTSEGEATAHYIGEMLKARGIKVSRLARGVPVGGELEYVDAGTIARAVLDRRQL</sequence>
<comment type="function">
    <text evidence="1">May play a role in DNA repair. It seems to be involved in an RecBC-independent recombinational process of DNA repair. It may act with RecF and RecO.</text>
</comment>
<comment type="similarity">
    <text evidence="1">Belongs to the RecR family.</text>
</comment>
<accession>Q8Y050</accession>
<evidence type="ECO:0000255" key="1">
    <source>
        <dbReference type="HAMAP-Rule" id="MF_00017"/>
    </source>
</evidence>
<dbReference type="EMBL" id="AL646052">
    <property type="protein sequence ID" value="CAD14896.1"/>
    <property type="molecule type" value="Genomic_DNA"/>
</dbReference>
<dbReference type="SMR" id="Q8Y050"/>
<dbReference type="STRING" id="267608.RSc1194"/>
<dbReference type="EnsemblBacteria" id="CAD14896">
    <property type="protein sequence ID" value="CAD14896"/>
    <property type="gene ID" value="RSc1194"/>
</dbReference>
<dbReference type="KEGG" id="rso:RSc1194"/>
<dbReference type="eggNOG" id="COG0353">
    <property type="taxonomic scope" value="Bacteria"/>
</dbReference>
<dbReference type="HOGENOM" id="CLU_060739_1_2_4"/>
<dbReference type="Proteomes" id="UP000001436">
    <property type="component" value="Chromosome"/>
</dbReference>
<dbReference type="GO" id="GO:0003677">
    <property type="term" value="F:DNA binding"/>
    <property type="evidence" value="ECO:0007669"/>
    <property type="project" value="UniProtKB-UniRule"/>
</dbReference>
<dbReference type="GO" id="GO:0008270">
    <property type="term" value="F:zinc ion binding"/>
    <property type="evidence" value="ECO:0007669"/>
    <property type="project" value="UniProtKB-KW"/>
</dbReference>
<dbReference type="GO" id="GO:0006310">
    <property type="term" value="P:DNA recombination"/>
    <property type="evidence" value="ECO:0007669"/>
    <property type="project" value="UniProtKB-UniRule"/>
</dbReference>
<dbReference type="GO" id="GO:0006281">
    <property type="term" value="P:DNA repair"/>
    <property type="evidence" value="ECO:0007669"/>
    <property type="project" value="UniProtKB-UniRule"/>
</dbReference>
<dbReference type="CDD" id="cd01025">
    <property type="entry name" value="TOPRIM_recR"/>
    <property type="match status" value="1"/>
</dbReference>
<dbReference type="Gene3D" id="3.40.1360.10">
    <property type="match status" value="1"/>
</dbReference>
<dbReference type="Gene3D" id="6.10.250.240">
    <property type="match status" value="1"/>
</dbReference>
<dbReference type="Gene3D" id="1.10.8.420">
    <property type="entry name" value="RecR Domain 1"/>
    <property type="match status" value="1"/>
</dbReference>
<dbReference type="HAMAP" id="MF_00017">
    <property type="entry name" value="RecR"/>
    <property type="match status" value="1"/>
</dbReference>
<dbReference type="InterPro" id="IPR000093">
    <property type="entry name" value="DNA_Rcmb_RecR"/>
</dbReference>
<dbReference type="InterPro" id="IPR023627">
    <property type="entry name" value="Rcmb_RecR"/>
</dbReference>
<dbReference type="InterPro" id="IPR015967">
    <property type="entry name" value="Rcmb_RecR_Znf"/>
</dbReference>
<dbReference type="InterPro" id="IPR006171">
    <property type="entry name" value="TOPRIM_dom"/>
</dbReference>
<dbReference type="InterPro" id="IPR034137">
    <property type="entry name" value="TOPRIM_RecR"/>
</dbReference>
<dbReference type="NCBIfam" id="TIGR00615">
    <property type="entry name" value="recR"/>
    <property type="match status" value="1"/>
</dbReference>
<dbReference type="PANTHER" id="PTHR30446">
    <property type="entry name" value="RECOMBINATION PROTEIN RECR"/>
    <property type="match status" value="1"/>
</dbReference>
<dbReference type="PANTHER" id="PTHR30446:SF0">
    <property type="entry name" value="RECOMBINATION PROTEIN RECR"/>
    <property type="match status" value="1"/>
</dbReference>
<dbReference type="Pfam" id="PF21175">
    <property type="entry name" value="RecR_C"/>
    <property type="match status" value="1"/>
</dbReference>
<dbReference type="Pfam" id="PF21176">
    <property type="entry name" value="RecR_HhH"/>
    <property type="match status" value="1"/>
</dbReference>
<dbReference type="Pfam" id="PF02132">
    <property type="entry name" value="RecR_ZnF"/>
    <property type="match status" value="1"/>
</dbReference>
<dbReference type="Pfam" id="PF13662">
    <property type="entry name" value="Toprim_4"/>
    <property type="match status" value="1"/>
</dbReference>
<dbReference type="SMART" id="SM00493">
    <property type="entry name" value="TOPRIM"/>
    <property type="match status" value="1"/>
</dbReference>
<dbReference type="SUPFAM" id="SSF111304">
    <property type="entry name" value="Recombination protein RecR"/>
    <property type="match status" value="1"/>
</dbReference>
<dbReference type="PROSITE" id="PS50880">
    <property type="entry name" value="TOPRIM"/>
    <property type="match status" value="1"/>
</dbReference>
<protein>
    <recommendedName>
        <fullName evidence="1">Recombination protein RecR</fullName>
    </recommendedName>
</protein>
<reference key="1">
    <citation type="journal article" date="2002" name="Nature">
        <title>Genome sequence of the plant pathogen Ralstonia solanacearum.</title>
        <authorList>
            <person name="Salanoubat M."/>
            <person name="Genin S."/>
            <person name="Artiguenave F."/>
            <person name="Gouzy J."/>
            <person name="Mangenot S."/>
            <person name="Arlat M."/>
            <person name="Billault A."/>
            <person name="Brottier P."/>
            <person name="Camus J.-C."/>
            <person name="Cattolico L."/>
            <person name="Chandler M."/>
            <person name="Choisne N."/>
            <person name="Claudel-Renard C."/>
            <person name="Cunnac S."/>
            <person name="Demange N."/>
            <person name="Gaspin C."/>
            <person name="Lavie M."/>
            <person name="Moisan A."/>
            <person name="Robert C."/>
            <person name="Saurin W."/>
            <person name="Schiex T."/>
            <person name="Siguier P."/>
            <person name="Thebault P."/>
            <person name="Whalen M."/>
            <person name="Wincker P."/>
            <person name="Levy M."/>
            <person name="Weissenbach J."/>
            <person name="Boucher C.A."/>
        </authorList>
    </citation>
    <scope>NUCLEOTIDE SEQUENCE [LARGE SCALE GENOMIC DNA]</scope>
    <source>
        <strain>ATCC BAA-1114 / GMI1000</strain>
    </source>
</reference>
<name>RECR_RALN1</name>